<sequence length="379" mass="42971">MTNIRKSHPLMKIINHSFIDLPTPSNISSWWNFGSLLGICLIPQIVTGLFLAMHYTADTTTAFSSVAHICRDVNYGWLIRYTHANGASMFFICLYVHVGRGIYYGSYMFTETWNMGIILLFSVMATAFMGYVLPWGQMSFWGATVITNLLSAIPYIGTSLVEWIWGGFSVDKATLTRFFAFHFILPFIITALTVVHLLFLHETGSNNPSGIDSDSDKIPFHPYYSIKDFMGFLFVFVILLALVLFSPDLLGDPDNYTPANPLNTPPHIKPECYFLFAYAILRSIPNKLGGVLALVLSIVILIIMPLLHTSKQRSMMFRPMSQCLFWILVANLLTLTWIGSQPVEYPYILIGQLSSMLYFTIILILMPLVSMMENKMLKW</sequence>
<gene>
    <name type="primary">MT-CYB</name>
    <name type="synonym">COB</name>
    <name type="synonym">CYTB</name>
    <name type="synonym">MTCYB</name>
</gene>
<reference key="1">
    <citation type="journal article" date="1997" name="Proc. R. Soc. B">
        <title>Ecological constraints drive social evolution in the African mole-rats.</title>
        <authorList>
            <person name="Faulkes C.G."/>
            <person name="Bennett N.C."/>
            <person name="Bruford M.W."/>
            <person name="O'Brien H.P."/>
            <person name="Aguilar G.H."/>
            <person name="Jarvis J.U.M."/>
        </authorList>
    </citation>
    <scope>NUCLEOTIDE SEQUENCE [GENOMIC DNA]</scope>
    <source>
        <strain>Isolate 197</strain>
    </source>
</reference>
<accession>O20612</accession>
<protein>
    <recommendedName>
        <fullName>Cytochrome b</fullName>
    </recommendedName>
    <alternativeName>
        <fullName>Complex III subunit 3</fullName>
    </alternativeName>
    <alternativeName>
        <fullName>Complex III subunit III</fullName>
    </alternativeName>
    <alternativeName>
        <fullName>Cytochrome b-c1 complex subunit 3</fullName>
    </alternativeName>
    <alternativeName>
        <fullName>Ubiquinol-cytochrome-c reductase complex cytochrome b subunit</fullName>
    </alternativeName>
</protein>
<evidence type="ECO:0000250" key="1"/>
<evidence type="ECO:0000250" key="2">
    <source>
        <dbReference type="UniProtKB" id="P00157"/>
    </source>
</evidence>
<evidence type="ECO:0000255" key="3">
    <source>
        <dbReference type="PROSITE-ProRule" id="PRU00967"/>
    </source>
</evidence>
<evidence type="ECO:0000255" key="4">
    <source>
        <dbReference type="PROSITE-ProRule" id="PRU00968"/>
    </source>
</evidence>
<name>CYB_FUKAM</name>
<comment type="function">
    <text evidence="2">Component of the ubiquinol-cytochrome c reductase complex (complex III or cytochrome b-c1 complex) that is part of the mitochondrial respiratory chain. The b-c1 complex mediates electron transfer from ubiquinol to cytochrome c. Contributes to the generation of a proton gradient across the mitochondrial membrane that is then used for ATP synthesis.</text>
</comment>
<comment type="cofactor">
    <cofactor evidence="2">
        <name>heme b</name>
        <dbReference type="ChEBI" id="CHEBI:60344"/>
    </cofactor>
    <text evidence="2">Binds 2 heme b groups non-covalently.</text>
</comment>
<comment type="subunit">
    <text evidence="2">The cytochrome bc1 complex contains 11 subunits: 3 respiratory subunits (MT-CYB, CYC1 and UQCRFS1), 2 core proteins (UQCRC1 and UQCRC2) and 6 low-molecular weight proteins (UQCRH/QCR6, UQCRB/QCR7, UQCRQ/QCR8, UQCR10/QCR9, UQCR11/QCR10 and a cleavage product of UQCRFS1). This cytochrome bc1 complex then forms a dimer.</text>
</comment>
<comment type="subcellular location">
    <subcellularLocation>
        <location evidence="2">Mitochondrion inner membrane</location>
        <topology evidence="2">Multi-pass membrane protein</topology>
    </subcellularLocation>
</comment>
<comment type="miscellaneous">
    <text evidence="1">Heme 1 (or BL or b562) is low-potential and absorbs at about 562 nm, and heme 2 (or BH or b566) is high-potential and absorbs at about 566 nm.</text>
</comment>
<comment type="similarity">
    <text evidence="3 4">Belongs to the cytochrome b family.</text>
</comment>
<comment type="caution">
    <text evidence="2">The full-length protein contains only eight transmembrane helices, not nine as predicted by bioinformatics tools.</text>
</comment>
<organism>
    <name type="scientific">Fukomys amatus</name>
    <name type="common">Zambian mole rat</name>
    <name type="synonym">Cryptomys hottentotus amatus</name>
    <dbReference type="NCBI Taxonomy" id="423608"/>
    <lineage>
        <taxon>Eukaryota</taxon>
        <taxon>Metazoa</taxon>
        <taxon>Chordata</taxon>
        <taxon>Craniata</taxon>
        <taxon>Vertebrata</taxon>
        <taxon>Euteleostomi</taxon>
        <taxon>Mammalia</taxon>
        <taxon>Eutheria</taxon>
        <taxon>Euarchontoglires</taxon>
        <taxon>Glires</taxon>
        <taxon>Rodentia</taxon>
        <taxon>Hystricomorpha</taxon>
        <taxon>Bathyergidae</taxon>
        <taxon>Fukomys</taxon>
    </lineage>
</organism>
<feature type="chain" id="PRO_0000255012" description="Cytochrome b">
    <location>
        <begin position="1"/>
        <end position="379"/>
    </location>
</feature>
<feature type="transmembrane region" description="Helical" evidence="2">
    <location>
        <begin position="33"/>
        <end position="53"/>
    </location>
</feature>
<feature type="transmembrane region" description="Helical" evidence="2">
    <location>
        <begin position="77"/>
        <end position="98"/>
    </location>
</feature>
<feature type="transmembrane region" description="Helical" evidence="2">
    <location>
        <begin position="113"/>
        <end position="133"/>
    </location>
</feature>
<feature type="transmembrane region" description="Helical" evidence="2">
    <location>
        <begin position="178"/>
        <end position="198"/>
    </location>
</feature>
<feature type="transmembrane region" description="Helical" evidence="2">
    <location>
        <begin position="226"/>
        <end position="246"/>
    </location>
</feature>
<feature type="transmembrane region" description="Helical" evidence="2">
    <location>
        <begin position="288"/>
        <end position="308"/>
    </location>
</feature>
<feature type="transmembrane region" description="Helical" evidence="2">
    <location>
        <begin position="320"/>
        <end position="340"/>
    </location>
</feature>
<feature type="transmembrane region" description="Helical" evidence="2">
    <location>
        <begin position="347"/>
        <end position="367"/>
    </location>
</feature>
<feature type="binding site" description="axial binding residue" evidence="2">
    <location>
        <position position="83"/>
    </location>
    <ligand>
        <name>heme b</name>
        <dbReference type="ChEBI" id="CHEBI:60344"/>
        <label>b562</label>
    </ligand>
    <ligandPart>
        <name>Fe</name>
        <dbReference type="ChEBI" id="CHEBI:18248"/>
    </ligandPart>
</feature>
<feature type="binding site" description="axial binding residue" evidence="2">
    <location>
        <position position="97"/>
    </location>
    <ligand>
        <name>heme b</name>
        <dbReference type="ChEBI" id="CHEBI:60344"/>
        <label>b566</label>
    </ligand>
    <ligandPart>
        <name>Fe</name>
        <dbReference type="ChEBI" id="CHEBI:18248"/>
    </ligandPart>
</feature>
<feature type="binding site" description="axial binding residue" evidence="2">
    <location>
        <position position="182"/>
    </location>
    <ligand>
        <name>heme b</name>
        <dbReference type="ChEBI" id="CHEBI:60344"/>
        <label>b562</label>
    </ligand>
    <ligandPart>
        <name>Fe</name>
        <dbReference type="ChEBI" id="CHEBI:18248"/>
    </ligandPart>
</feature>
<feature type="binding site" description="axial binding residue" evidence="2">
    <location>
        <position position="196"/>
    </location>
    <ligand>
        <name>heme b</name>
        <dbReference type="ChEBI" id="CHEBI:60344"/>
        <label>b566</label>
    </ligand>
    <ligandPart>
        <name>Fe</name>
        <dbReference type="ChEBI" id="CHEBI:18248"/>
    </ligandPart>
</feature>
<feature type="binding site" evidence="2">
    <location>
        <position position="201"/>
    </location>
    <ligand>
        <name>a ubiquinone</name>
        <dbReference type="ChEBI" id="CHEBI:16389"/>
    </ligand>
</feature>
<geneLocation type="mitochondrion"/>
<keyword id="KW-0249">Electron transport</keyword>
<keyword id="KW-0349">Heme</keyword>
<keyword id="KW-0408">Iron</keyword>
<keyword id="KW-0472">Membrane</keyword>
<keyword id="KW-0479">Metal-binding</keyword>
<keyword id="KW-0496">Mitochondrion</keyword>
<keyword id="KW-0999">Mitochondrion inner membrane</keyword>
<keyword id="KW-0679">Respiratory chain</keyword>
<keyword id="KW-0812">Transmembrane</keyword>
<keyword id="KW-1133">Transmembrane helix</keyword>
<keyword id="KW-0813">Transport</keyword>
<keyword id="KW-0830">Ubiquinone</keyword>
<dbReference type="EMBL" id="AF012233">
    <property type="protein sequence ID" value="AAC53477.1"/>
    <property type="molecule type" value="Genomic_DNA"/>
</dbReference>
<dbReference type="SMR" id="O20612"/>
<dbReference type="GO" id="GO:0005743">
    <property type="term" value="C:mitochondrial inner membrane"/>
    <property type="evidence" value="ECO:0007669"/>
    <property type="project" value="UniProtKB-SubCell"/>
</dbReference>
<dbReference type="GO" id="GO:0045275">
    <property type="term" value="C:respiratory chain complex III"/>
    <property type="evidence" value="ECO:0007669"/>
    <property type="project" value="InterPro"/>
</dbReference>
<dbReference type="GO" id="GO:0046872">
    <property type="term" value="F:metal ion binding"/>
    <property type="evidence" value="ECO:0007669"/>
    <property type="project" value="UniProtKB-KW"/>
</dbReference>
<dbReference type="GO" id="GO:0008121">
    <property type="term" value="F:ubiquinol-cytochrome-c reductase activity"/>
    <property type="evidence" value="ECO:0007669"/>
    <property type="project" value="InterPro"/>
</dbReference>
<dbReference type="GO" id="GO:0006122">
    <property type="term" value="P:mitochondrial electron transport, ubiquinol to cytochrome c"/>
    <property type="evidence" value="ECO:0007669"/>
    <property type="project" value="TreeGrafter"/>
</dbReference>
<dbReference type="CDD" id="cd00290">
    <property type="entry name" value="cytochrome_b_C"/>
    <property type="match status" value="1"/>
</dbReference>
<dbReference type="CDD" id="cd00284">
    <property type="entry name" value="Cytochrome_b_N"/>
    <property type="match status" value="1"/>
</dbReference>
<dbReference type="FunFam" id="1.20.810.10:FF:000002">
    <property type="entry name" value="Cytochrome b"/>
    <property type="match status" value="1"/>
</dbReference>
<dbReference type="Gene3D" id="1.20.810.10">
    <property type="entry name" value="Cytochrome Bc1 Complex, Chain C"/>
    <property type="match status" value="1"/>
</dbReference>
<dbReference type="InterPro" id="IPR005798">
    <property type="entry name" value="Cyt_b/b6_C"/>
</dbReference>
<dbReference type="InterPro" id="IPR036150">
    <property type="entry name" value="Cyt_b/b6_C_sf"/>
</dbReference>
<dbReference type="InterPro" id="IPR005797">
    <property type="entry name" value="Cyt_b/b6_N"/>
</dbReference>
<dbReference type="InterPro" id="IPR027387">
    <property type="entry name" value="Cytb/b6-like_sf"/>
</dbReference>
<dbReference type="InterPro" id="IPR030689">
    <property type="entry name" value="Cytochrome_b"/>
</dbReference>
<dbReference type="InterPro" id="IPR048260">
    <property type="entry name" value="Cytochrome_b_C_euk/bac"/>
</dbReference>
<dbReference type="InterPro" id="IPR048259">
    <property type="entry name" value="Cytochrome_b_N_euk/bac"/>
</dbReference>
<dbReference type="InterPro" id="IPR016174">
    <property type="entry name" value="Di-haem_cyt_TM"/>
</dbReference>
<dbReference type="PANTHER" id="PTHR19271">
    <property type="entry name" value="CYTOCHROME B"/>
    <property type="match status" value="1"/>
</dbReference>
<dbReference type="PANTHER" id="PTHR19271:SF16">
    <property type="entry name" value="CYTOCHROME B"/>
    <property type="match status" value="1"/>
</dbReference>
<dbReference type="Pfam" id="PF00032">
    <property type="entry name" value="Cytochrom_B_C"/>
    <property type="match status" value="1"/>
</dbReference>
<dbReference type="Pfam" id="PF00033">
    <property type="entry name" value="Cytochrome_B"/>
    <property type="match status" value="1"/>
</dbReference>
<dbReference type="PIRSF" id="PIRSF038885">
    <property type="entry name" value="COB"/>
    <property type="match status" value="1"/>
</dbReference>
<dbReference type="SUPFAM" id="SSF81648">
    <property type="entry name" value="a domain/subunit of cytochrome bc1 complex (Ubiquinol-cytochrome c reductase)"/>
    <property type="match status" value="1"/>
</dbReference>
<dbReference type="SUPFAM" id="SSF81342">
    <property type="entry name" value="Transmembrane di-heme cytochromes"/>
    <property type="match status" value="1"/>
</dbReference>
<dbReference type="PROSITE" id="PS51003">
    <property type="entry name" value="CYTB_CTER"/>
    <property type="match status" value="1"/>
</dbReference>
<dbReference type="PROSITE" id="PS51002">
    <property type="entry name" value="CYTB_NTER"/>
    <property type="match status" value="1"/>
</dbReference>
<proteinExistence type="inferred from homology"/>